<comment type="similarity">
    <text evidence="1">Belongs to the UPF0482 family.</text>
</comment>
<sequence>MNNTLSKRLCLTAMLTLAAVVYTTSAFAETSKLVIESGDSAQSRQEAAMEKEQWNDTRSLRQKVNTRAEKEWDKADAAFDNRDKCEQSANINAYWEPNTLRCLDRRTGRVITP</sequence>
<dbReference type="EMBL" id="CP001138">
    <property type="protein sequence ID" value="ACH51719.1"/>
    <property type="molecule type" value="Genomic_DNA"/>
</dbReference>
<dbReference type="RefSeq" id="WP_001066440.1">
    <property type="nucleotide sequence ID" value="NC_011149.1"/>
</dbReference>
<dbReference type="KEGG" id="sea:SeAg_B1669"/>
<dbReference type="HOGENOM" id="CLU_167574_0_0_6"/>
<dbReference type="Proteomes" id="UP000008819">
    <property type="component" value="Chromosome"/>
</dbReference>
<dbReference type="HAMAP" id="MF_01581">
    <property type="entry name" value="UPF0482"/>
    <property type="match status" value="1"/>
</dbReference>
<dbReference type="InterPro" id="IPR009700">
    <property type="entry name" value="DUF1283"/>
</dbReference>
<dbReference type="NCBIfam" id="NF010180">
    <property type="entry name" value="PRK13659.1"/>
    <property type="match status" value="1"/>
</dbReference>
<dbReference type="Pfam" id="PF06932">
    <property type="entry name" value="DUF1283"/>
    <property type="match status" value="1"/>
</dbReference>
<reference key="1">
    <citation type="journal article" date="2011" name="J. Bacteriol.">
        <title>Comparative genomics of 28 Salmonella enterica isolates: evidence for CRISPR-mediated adaptive sublineage evolution.</title>
        <authorList>
            <person name="Fricke W.F."/>
            <person name="Mammel M.K."/>
            <person name="McDermott P.F."/>
            <person name="Tartera C."/>
            <person name="White D.G."/>
            <person name="Leclerc J.E."/>
            <person name="Ravel J."/>
            <person name="Cebula T.A."/>
        </authorList>
    </citation>
    <scope>NUCLEOTIDE SEQUENCE [LARGE SCALE GENOMIC DNA]</scope>
    <source>
        <strain>SL483</strain>
    </source>
</reference>
<organism>
    <name type="scientific">Salmonella agona (strain SL483)</name>
    <dbReference type="NCBI Taxonomy" id="454166"/>
    <lineage>
        <taxon>Bacteria</taxon>
        <taxon>Pseudomonadati</taxon>
        <taxon>Pseudomonadota</taxon>
        <taxon>Gammaproteobacteria</taxon>
        <taxon>Enterobacterales</taxon>
        <taxon>Enterobacteriaceae</taxon>
        <taxon>Salmonella</taxon>
    </lineage>
</organism>
<feature type="signal peptide" evidence="1">
    <location>
        <begin position="1"/>
        <end position="28"/>
    </location>
</feature>
<feature type="chain" id="PRO_1000201005" description="UPF0482 protein YnfB">
    <location>
        <begin position="29"/>
        <end position="113"/>
    </location>
</feature>
<gene>
    <name evidence="1" type="primary">ynfB</name>
    <name type="ordered locus">SeAg_B1669</name>
</gene>
<name>YNFB_SALA4</name>
<protein>
    <recommendedName>
        <fullName evidence="1">UPF0482 protein YnfB</fullName>
    </recommendedName>
</protein>
<accession>B5F6E2</accession>
<evidence type="ECO:0000255" key="1">
    <source>
        <dbReference type="HAMAP-Rule" id="MF_01581"/>
    </source>
</evidence>
<keyword id="KW-0732">Signal</keyword>
<proteinExistence type="inferred from homology"/>